<keyword id="KW-0408">Iron</keyword>
<keyword id="KW-0479">Metal-binding</keyword>
<keyword id="KW-0561">Oxygen transport</keyword>
<keyword id="KW-0813">Transport</keyword>
<dbReference type="EMBL" id="AJ632197">
    <property type="protein sequence ID" value="CAG14943.1"/>
    <property type="molecule type" value="mRNA"/>
</dbReference>
<dbReference type="SMR" id="Q5K474"/>
<dbReference type="GO" id="GO:0005506">
    <property type="term" value="F:iron ion binding"/>
    <property type="evidence" value="ECO:0007669"/>
    <property type="project" value="InterPro"/>
</dbReference>
<dbReference type="GO" id="GO:0005344">
    <property type="term" value="F:oxygen carrier activity"/>
    <property type="evidence" value="ECO:0007669"/>
    <property type="project" value="UniProtKB-KW"/>
</dbReference>
<dbReference type="CDD" id="cd12107">
    <property type="entry name" value="Hemerythrin"/>
    <property type="match status" value="1"/>
</dbReference>
<dbReference type="Gene3D" id="1.20.120.50">
    <property type="entry name" value="Hemerythrin-like"/>
    <property type="match status" value="1"/>
</dbReference>
<dbReference type="InterPro" id="IPR002063">
    <property type="entry name" value="Haemerythrin"/>
</dbReference>
<dbReference type="InterPro" id="IPR016131">
    <property type="entry name" value="Haemerythrin_Fe_BS"/>
</dbReference>
<dbReference type="InterPro" id="IPR050669">
    <property type="entry name" value="Hemerythrin"/>
</dbReference>
<dbReference type="InterPro" id="IPR012312">
    <property type="entry name" value="Hemerythrin-like"/>
</dbReference>
<dbReference type="InterPro" id="IPR035938">
    <property type="entry name" value="Hemerythrin-like_sf"/>
</dbReference>
<dbReference type="InterPro" id="IPR012827">
    <property type="entry name" value="Hemerythrin_metal-bd"/>
</dbReference>
<dbReference type="NCBIfam" id="TIGR02481">
    <property type="entry name" value="hemeryth_dom"/>
    <property type="match status" value="1"/>
</dbReference>
<dbReference type="NCBIfam" id="TIGR00058">
    <property type="entry name" value="Hemerythrin"/>
    <property type="match status" value="1"/>
</dbReference>
<dbReference type="PANTHER" id="PTHR37164">
    <property type="entry name" value="BACTERIOHEMERYTHRIN"/>
    <property type="match status" value="1"/>
</dbReference>
<dbReference type="PANTHER" id="PTHR37164:SF1">
    <property type="entry name" value="BACTERIOHEMERYTHRIN"/>
    <property type="match status" value="1"/>
</dbReference>
<dbReference type="Pfam" id="PF01814">
    <property type="entry name" value="Hemerythrin"/>
    <property type="match status" value="1"/>
</dbReference>
<dbReference type="PIRSF" id="PIRSF002033">
    <property type="entry name" value="Hemerythrin"/>
    <property type="match status" value="1"/>
</dbReference>
<dbReference type="PRINTS" id="PR00186">
    <property type="entry name" value="HEMERYTHRIN"/>
</dbReference>
<dbReference type="SUPFAM" id="SSF47188">
    <property type="entry name" value="Hemerythrin-like"/>
    <property type="match status" value="1"/>
</dbReference>
<dbReference type="PROSITE" id="PS00550">
    <property type="entry name" value="HEMERYTHRINS"/>
    <property type="match status" value="1"/>
</dbReference>
<comment type="function">
    <text evidence="1">Hemerythrin is a respiratory protein in blood cells of certain marine worms. The oxygen-binding site in each chain contains two iron atoms (By similarity).</text>
</comment>
<comment type="similarity">
    <text evidence="3">Belongs to the hemerythrin family.</text>
</comment>
<reference key="1">
    <citation type="submission" date="2004-03" db="EMBL/GenBank/DDBJ databases">
        <title>Molecular evolution and phylogeny of Sipuculans hemerythrins.</title>
        <authorList>
            <person name="Vanin S."/>
            <person name="Negrisolo E."/>
            <person name="Bailly X."/>
            <person name="Bubacco L."/>
            <person name="Beltramini M."/>
            <person name="Salvato B."/>
        </authorList>
    </citation>
    <scope>NUCLEOTIDE SEQUENCE [MRNA]</scope>
</reference>
<feature type="chain" id="PRO_0000343357" description="Hemerythrin subunit B">
    <location>
        <begin position="1"/>
        <end position="119"/>
    </location>
</feature>
<feature type="binding site" evidence="2">
    <location>
        <position position="26"/>
    </location>
    <ligand>
        <name>Fe cation</name>
        <dbReference type="ChEBI" id="CHEBI:24875"/>
        <label>1</label>
    </ligand>
</feature>
<feature type="binding site" evidence="2">
    <location>
        <position position="55"/>
    </location>
    <ligand>
        <name>Fe cation</name>
        <dbReference type="ChEBI" id="CHEBI:24875"/>
        <label>1</label>
    </ligand>
</feature>
<feature type="binding site" evidence="2">
    <location>
        <position position="59"/>
    </location>
    <ligand>
        <name>Fe cation</name>
        <dbReference type="ChEBI" id="CHEBI:24875"/>
        <label>1</label>
    </ligand>
</feature>
<feature type="binding site" evidence="2">
    <location>
        <position position="59"/>
    </location>
    <ligand>
        <name>Fe cation</name>
        <dbReference type="ChEBI" id="CHEBI:24875"/>
        <label>2</label>
    </ligand>
</feature>
<feature type="binding site" evidence="2">
    <location>
        <position position="74"/>
    </location>
    <ligand>
        <name>Fe cation</name>
        <dbReference type="ChEBI" id="CHEBI:24875"/>
        <label>2</label>
    </ligand>
</feature>
<feature type="binding site" evidence="2">
    <location>
        <position position="78"/>
    </location>
    <ligand>
        <name>Fe cation</name>
        <dbReference type="ChEBI" id="CHEBI:24875"/>
        <label>2</label>
    </ligand>
</feature>
<feature type="binding site" evidence="2">
    <location>
        <position position="107"/>
    </location>
    <ligand>
        <name>Fe cation</name>
        <dbReference type="ChEBI" id="CHEBI:24875"/>
        <label>2</label>
    </ligand>
</feature>
<feature type="binding site" evidence="2">
    <location>
        <position position="112"/>
    </location>
    <ligand>
        <name>Fe cation</name>
        <dbReference type="ChEBI" id="CHEBI:24875"/>
        <label>1</label>
    </ligand>
</feature>
<feature type="binding site" evidence="2">
    <location>
        <position position="112"/>
    </location>
    <ligand>
        <name>Fe cation</name>
        <dbReference type="ChEBI" id="CHEBI:24875"/>
        <label>2</label>
    </ligand>
</feature>
<proteinExistence type="inferred from homology"/>
<protein>
    <recommendedName>
        <fullName>Hemerythrin subunit B</fullName>
        <shortName>Hr B</shortName>
    </recommendedName>
</protein>
<organism>
    <name type="scientific">Sipunculus nudus</name>
    <name type="common">Sipunculan worm</name>
    <dbReference type="NCBI Taxonomy" id="6446"/>
    <lineage>
        <taxon>Eukaryota</taxon>
        <taxon>Metazoa</taxon>
        <taxon>Spiralia</taxon>
        <taxon>Lophotrochozoa</taxon>
        <taxon>Annelida</taxon>
        <taxon>Sipuncula</taxon>
        <taxon>Sipunculidea</taxon>
        <taxon>Golfingiida</taxon>
        <taxon>Sipunculidae</taxon>
        <taxon>Sipunculus</taxon>
    </lineage>
</organism>
<sequence>MPFPVPDPFVWDTSFQVFYFKLDDQHRAIFETLFNSTNDNTPGNLQLFYIVTANHFEEEEGWMVSASYGGYDAHKKLHEEFLAKVRSFSAPVSKENLFYAKDWLVQHIKTIDFKYKQLL</sequence>
<accession>Q5K474</accession>
<evidence type="ECO:0000250" key="1"/>
<evidence type="ECO:0000250" key="2">
    <source>
        <dbReference type="UniProtKB" id="P02244"/>
    </source>
</evidence>
<evidence type="ECO:0000305" key="3"/>
<name>HEMTB_SIPNU</name>